<name>PQQC_PSEU2</name>
<reference key="1">
    <citation type="journal article" date="2005" name="Proc. Natl. Acad. Sci. U.S.A.">
        <title>Comparison of the complete genome sequences of Pseudomonas syringae pv. syringae B728a and pv. tomato DC3000.</title>
        <authorList>
            <person name="Feil H."/>
            <person name="Feil W.S."/>
            <person name="Chain P."/>
            <person name="Larimer F."/>
            <person name="Dibartolo G."/>
            <person name="Copeland A."/>
            <person name="Lykidis A."/>
            <person name="Trong S."/>
            <person name="Nolan M."/>
            <person name="Goltsman E."/>
            <person name="Thiel J."/>
            <person name="Malfatti S."/>
            <person name="Loper J.E."/>
            <person name="Lapidus A."/>
            <person name="Detter J.C."/>
            <person name="Land M."/>
            <person name="Richardson P.M."/>
            <person name="Kyrpides N.C."/>
            <person name="Ivanova N."/>
            <person name="Lindow S.E."/>
        </authorList>
    </citation>
    <scope>NUCLEOTIDE SEQUENCE [LARGE SCALE GENOMIC DNA]</scope>
    <source>
        <strain>B728a</strain>
    </source>
</reference>
<sequence length="251" mass="29117">MSEATALSPAEFEQALRAKGAYYHIYHPFHVAMYEGRATREQIQGWVANRFYYQVNIPLKDAAILANCPDREIRREWIQRLLDHDGAPGEDGGIEAWLRLGQAVGLDPDQLRSQELVLPGVRFAVDAYVNFARRANWQEAASSSLTELFAPQIHQSRLDSWPQHYPWIDPAGYEYFRTRLGQARRDVEHGLAITLQHYTTYEGQQRMLEILQFKLDILWSMLDAMSMAYELNRPPYHSVTDQRVWHKGITL</sequence>
<gene>
    <name evidence="1" type="primary">pqqC</name>
    <name type="ordered locus">Psyr_4672</name>
</gene>
<accession>Q4ZMC3</accession>
<keyword id="KW-0560">Oxidoreductase</keyword>
<keyword id="KW-0884">PQQ biosynthesis</keyword>
<proteinExistence type="inferred from homology"/>
<evidence type="ECO:0000255" key="1">
    <source>
        <dbReference type="HAMAP-Rule" id="MF_00654"/>
    </source>
</evidence>
<dbReference type="EC" id="1.3.3.11" evidence="1"/>
<dbReference type="EMBL" id="CP000075">
    <property type="protein sequence ID" value="AAY39699.1"/>
    <property type="molecule type" value="Genomic_DNA"/>
</dbReference>
<dbReference type="RefSeq" id="WP_003402120.1">
    <property type="nucleotide sequence ID" value="NC_007005.1"/>
</dbReference>
<dbReference type="RefSeq" id="YP_237737.1">
    <property type="nucleotide sequence ID" value="NC_007005.1"/>
</dbReference>
<dbReference type="SMR" id="Q4ZMC3"/>
<dbReference type="STRING" id="205918.Psyr_4672"/>
<dbReference type="GeneID" id="77280518"/>
<dbReference type="KEGG" id="psb:Psyr_4672"/>
<dbReference type="PATRIC" id="fig|205918.7.peg.4818"/>
<dbReference type="eggNOG" id="COG5424">
    <property type="taxonomic scope" value="Bacteria"/>
</dbReference>
<dbReference type="HOGENOM" id="CLU_080136_0_0_6"/>
<dbReference type="OrthoDB" id="9800756at2"/>
<dbReference type="UniPathway" id="UPA00539"/>
<dbReference type="Proteomes" id="UP000000426">
    <property type="component" value="Chromosome"/>
</dbReference>
<dbReference type="GO" id="GO:0033732">
    <property type="term" value="F:pyrroloquinoline-quinone synthase activity"/>
    <property type="evidence" value="ECO:0007669"/>
    <property type="project" value="UniProtKB-EC"/>
</dbReference>
<dbReference type="GO" id="GO:0018189">
    <property type="term" value="P:pyrroloquinoline quinone biosynthetic process"/>
    <property type="evidence" value="ECO:0007669"/>
    <property type="project" value="UniProtKB-UniRule"/>
</dbReference>
<dbReference type="GO" id="GO:0006790">
    <property type="term" value="P:sulfur compound metabolic process"/>
    <property type="evidence" value="ECO:0007669"/>
    <property type="project" value="UniProtKB-ARBA"/>
</dbReference>
<dbReference type="CDD" id="cd19370">
    <property type="entry name" value="TenA_PqqC"/>
    <property type="match status" value="1"/>
</dbReference>
<dbReference type="Gene3D" id="1.20.910.10">
    <property type="entry name" value="Heme oxygenase-like"/>
    <property type="match status" value="1"/>
</dbReference>
<dbReference type="HAMAP" id="MF_00654">
    <property type="entry name" value="PQQ_syn_PqqC"/>
    <property type="match status" value="1"/>
</dbReference>
<dbReference type="InterPro" id="IPR016084">
    <property type="entry name" value="Haem_Oase-like_multi-hlx"/>
</dbReference>
<dbReference type="InterPro" id="IPR011845">
    <property type="entry name" value="PqqC"/>
</dbReference>
<dbReference type="InterPro" id="IPR039068">
    <property type="entry name" value="PqqC-like"/>
</dbReference>
<dbReference type="InterPro" id="IPR004305">
    <property type="entry name" value="Thiaminase-2/PQQC"/>
</dbReference>
<dbReference type="NCBIfam" id="TIGR02111">
    <property type="entry name" value="PQQ_syn_pqqC"/>
    <property type="match status" value="1"/>
</dbReference>
<dbReference type="PANTHER" id="PTHR40279:SF3">
    <property type="entry name" value="4-AMINOBENZOATE SYNTHASE"/>
    <property type="match status" value="1"/>
</dbReference>
<dbReference type="PANTHER" id="PTHR40279">
    <property type="entry name" value="PQQC-LIKE PROTEIN"/>
    <property type="match status" value="1"/>
</dbReference>
<dbReference type="Pfam" id="PF03070">
    <property type="entry name" value="TENA_THI-4"/>
    <property type="match status" value="1"/>
</dbReference>
<dbReference type="SUPFAM" id="SSF48613">
    <property type="entry name" value="Heme oxygenase-like"/>
    <property type="match status" value="1"/>
</dbReference>
<protein>
    <recommendedName>
        <fullName evidence="1">Pyrroloquinoline-quinone synthase</fullName>
        <ecNumber evidence="1">1.3.3.11</ecNumber>
    </recommendedName>
    <alternativeName>
        <fullName evidence="1">Coenzyme PQQ synthesis protein C</fullName>
    </alternativeName>
    <alternativeName>
        <fullName evidence="1">Pyrroloquinoline quinone biosynthesis protein C</fullName>
    </alternativeName>
</protein>
<organism>
    <name type="scientific">Pseudomonas syringae pv. syringae (strain B728a)</name>
    <dbReference type="NCBI Taxonomy" id="205918"/>
    <lineage>
        <taxon>Bacteria</taxon>
        <taxon>Pseudomonadati</taxon>
        <taxon>Pseudomonadota</taxon>
        <taxon>Gammaproteobacteria</taxon>
        <taxon>Pseudomonadales</taxon>
        <taxon>Pseudomonadaceae</taxon>
        <taxon>Pseudomonas</taxon>
        <taxon>Pseudomonas syringae</taxon>
    </lineage>
</organism>
<comment type="function">
    <text evidence="1">Ring cyclization and eight-electron oxidation of 3a-(2-amino-2-carboxyethyl)-4,5-dioxo-4,5,6,7,8,9-hexahydroquinoline-7,9-dicarboxylic-acid to PQQ.</text>
</comment>
<comment type="catalytic activity">
    <reaction evidence="1">
        <text>6-(2-amino-2-carboxyethyl)-7,8-dioxo-1,2,3,4,7,8-hexahydroquinoline-2,4-dicarboxylate + 3 O2 = pyrroloquinoline quinone + 2 H2O2 + 2 H2O + H(+)</text>
        <dbReference type="Rhea" id="RHEA:10692"/>
        <dbReference type="ChEBI" id="CHEBI:15377"/>
        <dbReference type="ChEBI" id="CHEBI:15378"/>
        <dbReference type="ChEBI" id="CHEBI:15379"/>
        <dbReference type="ChEBI" id="CHEBI:16240"/>
        <dbReference type="ChEBI" id="CHEBI:58442"/>
        <dbReference type="ChEBI" id="CHEBI:58778"/>
        <dbReference type="EC" id="1.3.3.11"/>
    </reaction>
</comment>
<comment type="pathway">
    <text evidence="1">Cofactor biosynthesis; pyrroloquinoline quinone biosynthesis.</text>
</comment>
<comment type="similarity">
    <text evidence="1">Belongs to the PqqC family.</text>
</comment>
<feature type="chain" id="PRO_1000061676" description="Pyrroloquinoline-quinone synthase">
    <location>
        <begin position="1"/>
        <end position="251"/>
    </location>
</feature>